<dbReference type="EC" id="4.3.2.3" evidence="1"/>
<dbReference type="EMBL" id="CU928160">
    <property type="protein sequence ID" value="CAQ97380.1"/>
    <property type="molecule type" value="Genomic_DNA"/>
</dbReference>
<dbReference type="RefSeq" id="WP_000776392.1">
    <property type="nucleotide sequence ID" value="NC_011741.1"/>
</dbReference>
<dbReference type="SMR" id="B7M4K9"/>
<dbReference type="KEGG" id="ecr:ECIAI1_0508"/>
<dbReference type="HOGENOM" id="CLU_070848_1_1_6"/>
<dbReference type="UniPathway" id="UPA00395"/>
<dbReference type="GO" id="GO:0004848">
    <property type="term" value="F:ureidoglycolate hydrolase activity"/>
    <property type="evidence" value="ECO:0007669"/>
    <property type="project" value="InterPro"/>
</dbReference>
<dbReference type="GO" id="GO:0050385">
    <property type="term" value="F:ureidoglycolate lyase activity"/>
    <property type="evidence" value="ECO:0007669"/>
    <property type="project" value="UniProtKB-UniRule"/>
</dbReference>
<dbReference type="GO" id="GO:0000256">
    <property type="term" value="P:allantoin catabolic process"/>
    <property type="evidence" value="ECO:0007669"/>
    <property type="project" value="UniProtKB-UniRule"/>
</dbReference>
<dbReference type="GO" id="GO:0006145">
    <property type="term" value="P:purine nucleobase catabolic process"/>
    <property type="evidence" value="ECO:0007669"/>
    <property type="project" value="UniProtKB-UniRule"/>
</dbReference>
<dbReference type="CDD" id="cd20298">
    <property type="entry name" value="cupin_UAH"/>
    <property type="match status" value="1"/>
</dbReference>
<dbReference type="FunFam" id="2.60.120.480:FF:000001">
    <property type="entry name" value="Ureidoglycolate lyase"/>
    <property type="match status" value="1"/>
</dbReference>
<dbReference type="Gene3D" id="2.60.120.480">
    <property type="entry name" value="Ureidoglycolate hydrolase"/>
    <property type="match status" value="1"/>
</dbReference>
<dbReference type="HAMAP" id="MF_00616">
    <property type="entry name" value="Ureidogly_lyase"/>
    <property type="match status" value="1"/>
</dbReference>
<dbReference type="InterPro" id="IPR011051">
    <property type="entry name" value="RmlC_Cupin_sf"/>
</dbReference>
<dbReference type="InterPro" id="IPR047233">
    <property type="entry name" value="UAH_cupin"/>
</dbReference>
<dbReference type="InterPro" id="IPR007247">
    <property type="entry name" value="Ureidogly_lyase"/>
</dbReference>
<dbReference type="InterPro" id="IPR023525">
    <property type="entry name" value="Ureidogly_lyase_bac"/>
</dbReference>
<dbReference type="InterPro" id="IPR024060">
    <property type="entry name" value="Ureidoglycolate_lyase_dom_sf"/>
</dbReference>
<dbReference type="NCBIfam" id="NF002948">
    <property type="entry name" value="PRK03606.1-1"/>
    <property type="match status" value="1"/>
</dbReference>
<dbReference type="NCBIfam" id="NF009932">
    <property type="entry name" value="PRK13395.1"/>
    <property type="match status" value="1"/>
</dbReference>
<dbReference type="PANTHER" id="PTHR21221">
    <property type="entry name" value="UREIDOGLYCOLATE HYDROLASE"/>
    <property type="match status" value="1"/>
</dbReference>
<dbReference type="PANTHER" id="PTHR21221:SF1">
    <property type="entry name" value="UREIDOGLYCOLATE LYASE"/>
    <property type="match status" value="1"/>
</dbReference>
<dbReference type="Pfam" id="PF04115">
    <property type="entry name" value="Ureidogly_lyase"/>
    <property type="match status" value="1"/>
</dbReference>
<dbReference type="PIRSF" id="PIRSF017306">
    <property type="entry name" value="Ureidogly_hydro"/>
    <property type="match status" value="1"/>
</dbReference>
<dbReference type="SUPFAM" id="SSF51182">
    <property type="entry name" value="RmlC-like cupins"/>
    <property type="match status" value="1"/>
</dbReference>
<comment type="function">
    <text evidence="1">Catalyzes the catabolism of the allantoin degradation intermediate (S)-ureidoglycolate, generating urea and glyoxylate. Involved in the anaerobic utilization of allantoin as sole nitrogen source. Reinforces the induction of genes involved in the degradation of allantoin and glyoxylate by producing glyoxylate.</text>
</comment>
<comment type="catalytic activity">
    <reaction evidence="1">
        <text>(S)-ureidoglycolate = urea + glyoxylate</text>
        <dbReference type="Rhea" id="RHEA:11304"/>
        <dbReference type="ChEBI" id="CHEBI:16199"/>
        <dbReference type="ChEBI" id="CHEBI:36655"/>
        <dbReference type="ChEBI" id="CHEBI:57296"/>
        <dbReference type="EC" id="4.3.2.3"/>
    </reaction>
</comment>
<comment type="cofactor">
    <cofactor evidence="1">
        <name>Ni(2+)</name>
        <dbReference type="ChEBI" id="CHEBI:49786"/>
    </cofactor>
</comment>
<comment type="pathway">
    <text evidence="1">Nitrogen metabolism; (S)-allantoin degradation.</text>
</comment>
<comment type="subunit">
    <text evidence="1">Homodimer.</text>
</comment>
<comment type="similarity">
    <text evidence="1">Belongs to the ureidoglycolate lyase family.</text>
</comment>
<organism>
    <name type="scientific">Escherichia coli O8 (strain IAI1)</name>
    <dbReference type="NCBI Taxonomy" id="585034"/>
    <lineage>
        <taxon>Bacteria</taxon>
        <taxon>Pseudomonadati</taxon>
        <taxon>Pseudomonadota</taxon>
        <taxon>Gammaproteobacteria</taxon>
        <taxon>Enterobacterales</taxon>
        <taxon>Enterobacteriaceae</taxon>
        <taxon>Escherichia</taxon>
    </lineage>
</organism>
<feature type="chain" id="PRO_1000130413" description="Ureidoglycolate lyase">
    <location>
        <begin position="1"/>
        <end position="160"/>
    </location>
</feature>
<gene>
    <name evidence="1" type="primary">allA</name>
    <name type="ordered locus">ECIAI1_0508</name>
</gene>
<sequence>MKLQVLPLSQEAFSAYGDVIETQQRDFFHINNGLVERYHDLALVEILEQDRTLISINRAQPANLPLTIYELERHPLGTQAFIPMKGEVFVVVVALGDDKPDLSTLRAFITNGEQGVNYHRNVWHHPLFAWQRVTDFLTIDRGGSDNCDVESIPEQELCFA</sequence>
<reference key="1">
    <citation type="journal article" date="2009" name="PLoS Genet.">
        <title>Organised genome dynamics in the Escherichia coli species results in highly diverse adaptive paths.</title>
        <authorList>
            <person name="Touchon M."/>
            <person name="Hoede C."/>
            <person name="Tenaillon O."/>
            <person name="Barbe V."/>
            <person name="Baeriswyl S."/>
            <person name="Bidet P."/>
            <person name="Bingen E."/>
            <person name="Bonacorsi S."/>
            <person name="Bouchier C."/>
            <person name="Bouvet O."/>
            <person name="Calteau A."/>
            <person name="Chiapello H."/>
            <person name="Clermont O."/>
            <person name="Cruveiller S."/>
            <person name="Danchin A."/>
            <person name="Diard M."/>
            <person name="Dossat C."/>
            <person name="Karoui M.E."/>
            <person name="Frapy E."/>
            <person name="Garry L."/>
            <person name="Ghigo J.M."/>
            <person name="Gilles A.M."/>
            <person name="Johnson J."/>
            <person name="Le Bouguenec C."/>
            <person name="Lescat M."/>
            <person name="Mangenot S."/>
            <person name="Martinez-Jehanne V."/>
            <person name="Matic I."/>
            <person name="Nassif X."/>
            <person name="Oztas S."/>
            <person name="Petit M.A."/>
            <person name="Pichon C."/>
            <person name="Rouy Z."/>
            <person name="Ruf C.S."/>
            <person name="Schneider D."/>
            <person name="Tourret J."/>
            <person name="Vacherie B."/>
            <person name="Vallenet D."/>
            <person name="Medigue C."/>
            <person name="Rocha E.P.C."/>
            <person name="Denamur E."/>
        </authorList>
    </citation>
    <scope>NUCLEOTIDE SEQUENCE [LARGE SCALE GENOMIC DNA]</scope>
    <source>
        <strain>IAI1</strain>
    </source>
</reference>
<evidence type="ECO:0000255" key="1">
    <source>
        <dbReference type="HAMAP-Rule" id="MF_00616"/>
    </source>
</evidence>
<protein>
    <recommendedName>
        <fullName evidence="1">Ureidoglycolate lyase</fullName>
        <ecNumber evidence="1">4.3.2.3</ecNumber>
    </recommendedName>
    <alternativeName>
        <fullName evidence="1">Ureidoglycolatase</fullName>
    </alternativeName>
</protein>
<keyword id="KW-0456">Lyase</keyword>
<keyword id="KW-0659">Purine metabolism</keyword>
<proteinExistence type="inferred from homology"/>
<name>ALLA_ECO8A</name>
<accession>B7M4K9</accession>